<reference key="1">
    <citation type="journal article" date="2004" name="Gene">
        <title>Divergent evolution of the prolactin-inducible protein gene and related genes in the mouse genome.</title>
        <authorList>
            <person name="Osawa M."/>
            <person name="Horiuchi H."/>
            <person name="Tian W."/>
            <person name="Kaneko M."/>
        </authorList>
    </citation>
    <scope>NUCLEOTIDE SEQUENCE [GENOMIC DNA]</scope>
</reference>
<evidence type="ECO:0000250" key="1"/>
<evidence type="ECO:0000250" key="2">
    <source>
        <dbReference type="UniProtKB" id="P12273"/>
    </source>
</evidence>
<evidence type="ECO:0000255" key="3"/>
<evidence type="ECO:0000305" key="4"/>
<name>PIP_MACFU</name>
<gene>
    <name type="primary">PIP</name>
</gene>
<protein>
    <recommendedName>
        <fullName>Prolactin-inducible protein homolog</fullName>
    </recommendedName>
    <alternativeName>
        <fullName>Prolactin-induced protein</fullName>
    </alternativeName>
</protein>
<dbReference type="EMBL" id="AB098481">
    <property type="protein sequence ID" value="BAD04929.1"/>
    <property type="molecule type" value="Genomic_DNA"/>
</dbReference>
<dbReference type="SMR" id="P60988"/>
<dbReference type="GlyCosmos" id="P60988">
    <property type="glycosylation" value="1 site, No reported glycans"/>
</dbReference>
<dbReference type="GO" id="GO:0005615">
    <property type="term" value="C:extracellular space"/>
    <property type="evidence" value="ECO:0007669"/>
    <property type="project" value="TreeGrafter"/>
</dbReference>
<dbReference type="GO" id="GO:0004190">
    <property type="term" value="F:aspartic-type endopeptidase activity"/>
    <property type="evidence" value="ECO:0007669"/>
    <property type="project" value="TreeGrafter"/>
</dbReference>
<dbReference type="GO" id="GO:0006508">
    <property type="term" value="P:proteolysis"/>
    <property type="evidence" value="ECO:0007669"/>
    <property type="project" value="TreeGrafter"/>
</dbReference>
<dbReference type="GO" id="GO:0002682">
    <property type="term" value="P:regulation of immune system process"/>
    <property type="evidence" value="ECO:0007669"/>
    <property type="project" value="TreeGrafter"/>
</dbReference>
<dbReference type="FunFam" id="2.60.40.10:FF:001572">
    <property type="entry name" value="Prolactin-inducible protein homolog"/>
    <property type="match status" value="1"/>
</dbReference>
<dbReference type="Gene3D" id="2.60.40.10">
    <property type="entry name" value="Immunoglobulins"/>
    <property type="match status" value="1"/>
</dbReference>
<dbReference type="InterPro" id="IPR013783">
    <property type="entry name" value="Ig-like_fold"/>
</dbReference>
<dbReference type="InterPro" id="IPR014756">
    <property type="entry name" value="Ig_E-set"/>
</dbReference>
<dbReference type="InterPro" id="IPR007990">
    <property type="entry name" value="PIP"/>
</dbReference>
<dbReference type="PANTHER" id="PTHR15096:SF5">
    <property type="entry name" value="PROLACTIN-INDUCIBLE PROTEIN"/>
    <property type="match status" value="1"/>
</dbReference>
<dbReference type="PANTHER" id="PTHR15096">
    <property type="entry name" value="PROLACTIN-INDUCIBLE PROTEIN/SEMINAL VESICLE ANTIGEN"/>
    <property type="match status" value="1"/>
</dbReference>
<dbReference type="Pfam" id="PF05326">
    <property type="entry name" value="SVA"/>
    <property type="match status" value="1"/>
</dbReference>
<dbReference type="PIRSF" id="PIRSF002572">
    <property type="entry name" value="PIP-GCDFP-15"/>
    <property type="match status" value="1"/>
</dbReference>
<dbReference type="SUPFAM" id="SSF81296">
    <property type="entry name" value="E set domains"/>
    <property type="match status" value="1"/>
</dbReference>
<sequence length="146" mass="16662">MRLLQFLFRASPATLLLVLCLHLGANKAQENTRRIIIQNFEIPTTANRDEEVTAVLQVKTELKECMVAKVYLTSDVPVEGAFNYKYTRCLCDDYPNTYYWDFHTNRTVQIAAVVDIIRELGICPNDAAVTPISKNRFYTIKTLVVA</sequence>
<accession>P60988</accession>
<organism>
    <name type="scientific">Macaca fuscata fuscata</name>
    <name type="common">Japanese macaque</name>
    <dbReference type="NCBI Taxonomy" id="9543"/>
    <lineage>
        <taxon>Eukaryota</taxon>
        <taxon>Metazoa</taxon>
        <taxon>Chordata</taxon>
        <taxon>Craniata</taxon>
        <taxon>Vertebrata</taxon>
        <taxon>Euteleostomi</taxon>
        <taxon>Mammalia</taxon>
        <taxon>Eutheria</taxon>
        <taxon>Euarchontoglires</taxon>
        <taxon>Primates</taxon>
        <taxon>Haplorrhini</taxon>
        <taxon>Catarrhini</taxon>
        <taxon>Cercopithecidae</taxon>
        <taxon>Cercopithecinae</taxon>
        <taxon>Macaca</taxon>
    </lineage>
</organism>
<proteinExistence type="inferred from homology"/>
<comment type="subunit">
    <text evidence="1">Monomer. Interacts with AZGP1 (By similarity).</text>
</comment>
<comment type="subcellular location">
    <subcellularLocation>
        <location evidence="1">Secreted</location>
    </subcellularLocation>
</comment>
<comment type="similarity">
    <text evidence="4">Belongs to the PIP family.</text>
</comment>
<feature type="signal peptide" evidence="1">
    <location>
        <begin position="1"/>
        <end position="28"/>
    </location>
</feature>
<feature type="chain" id="PRO_0000024289" description="Prolactin-inducible protein homolog">
    <location>
        <begin position="29"/>
        <end position="146"/>
    </location>
</feature>
<feature type="modified residue" description="Pyrrolidone carboxylic acid" evidence="2">
    <location>
        <position position="29"/>
    </location>
</feature>
<feature type="glycosylation site" description="N-linked (GlcNAc...) asparagine" evidence="3">
    <location>
        <position position="105"/>
    </location>
</feature>
<feature type="disulfide bond" evidence="1">
    <location>
        <begin position="65"/>
        <end position="91"/>
    </location>
</feature>
<feature type="disulfide bond" evidence="1">
    <location>
        <begin position="89"/>
        <end position="123"/>
    </location>
</feature>
<keyword id="KW-1015">Disulfide bond</keyword>
<keyword id="KW-0325">Glycoprotein</keyword>
<keyword id="KW-0873">Pyrrolidone carboxylic acid</keyword>
<keyword id="KW-0964">Secreted</keyword>
<keyword id="KW-0732">Signal</keyword>